<keyword id="KW-0378">Hydrolase</keyword>
<keyword id="KW-0479">Metal-binding</keyword>
<keyword id="KW-1185">Reference proteome</keyword>
<keyword id="KW-0862">Zinc</keyword>
<name>MSHB_ACTMD</name>
<reference key="1">
    <citation type="journal article" date="2009" name="Stand. Genomic Sci.">
        <title>Complete genome sequence of Actinosynnema mirum type strain (101).</title>
        <authorList>
            <person name="Land M."/>
            <person name="Lapidus A."/>
            <person name="Mayilraj S."/>
            <person name="Chen F."/>
            <person name="Copeland A."/>
            <person name="Del Rio T.G."/>
            <person name="Nolan M."/>
            <person name="Lucas S."/>
            <person name="Tice H."/>
            <person name="Cheng J.F."/>
            <person name="Chertkov O."/>
            <person name="Bruce D."/>
            <person name="Goodwin L."/>
            <person name="Pitluck S."/>
            <person name="Rohde M."/>
            <person name="Goker M."/>
            <person name="Pati A."/>
            <person name="Ivanova N."/>
            <person name="Mavromatis K."/>
            <person name="Chen A."/>
            <person name="Palaniappan K."/>
            <person name="Hauser L."/>
            <person name="Chang Y.J."/>
            <person name="Jeffries C.C."/>
            <person name="Brettin T."/>
            <person name="Detter J.C."/>
            <person name="Han C."/>
            <person name="Chain P."/>
            <person name="Tindall B.J."/>
            <person name="Bristow J."/>
            <person name="Eisen J.A."/>
            <person name="Markowitz V."/>
            <person name="Hugenholtz P."/>
            <person name="Kyrpides N.C."/>
            <person name="Klenk H.P."/>
        </authorList>
    </citation>
    <scope>NUCLEOTIDE SEQUENCE [LARGE SCALE GENOMIC DNA]</scope>
    <source>
        <strain>ATCC 29888 / DSM 43827 / JCM 3225 / NBRC 14064 / NCIMB 13271 / NRRL B-12336 / IMRU 3971 / 101</strain>
    </source>
</reference>
<organism>
    <name type="scientific">Actinosynnema mirum (strain ATCC 29888 / DSM 43827 / JCM 3225 / NBRC 14064 / NCIMB 13271 / NRRL B-12336 / IMRU 3971 / 101)</name>
    <dbReference type="NCBI Taxonomy" id="446462"/>
    <lineage>
        <taxon>Bacteria</taxon>
        <taxon>Bacillati</taxon>
        <taxon>Actinomycetota</taxon>
        <taxon>Actinomycetes</taxon>
        <taxon>Pseudonocardiales</taxon>
        <taxon>Pseudonocardiaceae</taxon>
        <taxon>Actinosynnema</taxon>
    </lineage>
</organism>
<protein>
    <recommendedName>
        <fullName evidence="1">1D-myo-inositol 2-acetamido-2-deoxy-alpha-D-glucopyranoside deacetylase</fullName>
        <shortName evidence="1">GlcNAc-Ins deacetylase</shortName>
        <ecNumber evidence="1">3.5.1.103</ecNumber>
    </recommendedName>
    <alternativeName>
        <fullName>N-acetyl-1-D-myo-inositol 2-amino-2-deoxy-alpha-D-glucopyranoside deacetylase</fullName>
    </alternativeName>
</protein>
<comment type="function">
    <text evidence="1">Catalyzes the deacetylation of 1D-myo-inositol 2-acetamido-2-deoxy-alpha-D-glucopyranoside (GlcNAc-Ins) in the mycothiol biosynthesis pathway.</text>
</comment>
<comment type="catalytic activity">
    <reaction evidence="1">
        <text>1D-myo-inositol 2-acetamido-2-deoxy-alpha-D-glucopyranoside + H2O = 1D-myo-inositol 2-amino-2-deoxy-alpha-D-glucopyranoside + acetate</text>
        <dbReference type="Rhea" id="RHEA:26180"/>
        <dbReference type="ChEBI" id="CHEBI:15377"/>
        <dbReference type="ChEBI" id="CHEBI:30089"/>
        <dbReference type="ChEBI" id="CHEBI:52442"/>
        <dbReference type="ChEBI" id="CHEBI:58886"/>
        <dbReference type="EC" id="3.5.1.103"/>
    </reaction>
</comment>
<comment type="cofactor">
    <cofactor evidence="1">
        <name>Zn(2+)</name>
        <dbReference type="ChEBI" id="CHEBI:29105"/>
    </cofactor>
    <text evidence="1">Binds 1 zinc ion per subunit.</text>
</comment>
<comment type="similarity">
    <text evidence="1">Belongs to the MshB deacetylase family.</text>
</comment>
<proteinExistence type="inferred from homology"/>
<dbReference type="EC" id="3.5.1.103" evidence="1"/>
<dbReference type="EMBL" id="CP001630">
    <property type="protein sequence ID" value="ACU34728.1"/>
    <property type="molecule type" value="Genomic_DNA"/>
</dbReference>
<dbReference type="RefSeq" id="WP_012783390.1">
    <property type="nucleotide sequence ID" value="NC_013093.1"/>
</dbReference>
<dbReference type="SMR" id="C6WKX3"/>
<dbReference type="STRING" id="446462.Amir_0766"/>
<dbReference type="KEGG" id="ami:Amir_0766"/>
<dbReference type="eggNOG" id="COG2120">
    <property type="taxonomic scope" value="Bacteria"/>
</dbReference>
<dbReference type="HOGENOM" id="CLU_049311_2_1_11"/>
<dbReference type="OrthoDB" id="158614at2"/>
<dbReference type="Proteomes" id="UP000002213">
    <property type="component" value="Chromosome"/>
</dbReference>
<dbReference type="GO" id="GO:0035595">
    <property type="term" value="F:N-acetylglucosaminylinositol deacetylase activity"/>
    <property type="evidence" value="ECO:0007669"/>
    <property type="project" value="UniProtKB-EC"/>
</dbReference>
<dbReference type="GO" id="GO:0008270">
    <property type="term" value="F:zinc ion binding"/>
    <property type="evidence" value="ECO:0007669"/>
    <property type="project" value="UniProtKB-UniRule"/>
</dbReference>
<dbReference type="GO" id="GO:0010125">
    <property type="term" value="P:mycothiol biosynthetic process"/>
    <property type="evidence" value="ECO:0007669"/>
    <property type="project" value="UniProtKB-UniRule"/>
</dbReference>
<dbReference type="Gene3D" id="3.40.50.10320">
    <property type="entry name" value="LmbE-like"/>
    <property type="match status" value="1"/>
</dbReference>
<dbReference type="HAMAP" id="MF_01696">
    <property type="entry name" value="MshB"/>
    <property type="match status" value="1"/>
</dbReference>
<dbReference type="InterPro" id="IPR003737">
    <property type="entry name" value="GlcNAc_PI_deacetylase-related"/>
</dbReference>
<dbReference type="InterPro" id="IPR024078">
    <property type="entry name" value="LmbE-like_dom_sf"/>
</dbReference>
<dbReference type="InterPro" id="IPR017810">
    <property type="entry name" value="Mycothiol_biosynthesis_MshB"/>
</dbReference>
<dbReference type="NCBIfam" id="TIGR03445">
    <property type="entry name" value="mycothiol_MshB"/>
    <property type="match status" value="1"/>
</dbReference>
<dbReference type="PANTHER" id="PTHR12993:SF26">
    <property type="entry name" value="1D-MYO-INOSITOL 2-ACETAMIDO-2-DEOXY-ALPHA-D-GLUCOPYRANOSIDE DEACETYLASE"/>
    <property type="match status" value="1"/>
</dbReference>
<dbReference type="PANTHER" id="PTHR12993">
    <property type="entry name" value="N-ACETYLGLUCOSAMINYL-PHOSPHATIDYLINOSITOL DE-N-ACETYLASE-RELATED"/>
    <property type="match status" value="1"/>
</dbReference>
<dbReference type="Pfam" id="PF02585">
    <property type="entry name" value="PIG-L"/>
    <property type="match status" value="1"/>
</dbReference>
<dbReference type="SUPFAM" id="SSF102588">
    <property type="entry name" value="LmbE-like"/>
    <property type="match status" value="1"/>
</dbReference>
<evidence type="ECO:0000255" key="1">
    <source>
        <dbReference type="HAMAP-Rule" id="MF_01696"/>
    </source>
</evidence>
<feature type="chain" id="PRO_0000400172" description="1D-myo-inositol 2-acetamido-2-deoxy-alpha-D-glucopyranoside deacetylase">
    <location>
        <begin position="1"/>
        <end position="283"/>
    </location>
</feature>
<feature type="binding site" evidence="1">
    <location>
        <position position="15"/>
    </location>
    <ligand>
        <name>Zn(2+)</name>
        <dbReference type="ChEBI" id="CHEBI:29105"/>
    </ligand>
</feature>
<feature type="binding site" evidence="1">
    <location>
        <position position="18"/>
    </location>
    <ligand>
        <name>Zn(2+)</name>
        <dbReference type="ChEBI" id="CHEBI:29105"/>
    </ligand>
</feature>
<feature type="binding site" evidence="1">
    <location>
        <position position="150"/>
    </location>
    <ligand>
        <name>Zn(2+)</name>
        <dbReference type="ChEBI" id="CHEBI:29105"/>
    </ligand>
</feature>
<gene>
    <name evidence="1" type="primary">mshB</name>
    <name type="ordered locus">Amir_0766</name>
</gene>
<accession>C6WKX3</accession>
<sequence>MTLTAPPRLLLVHAHPDDESLWTGGTIARYAADGVQVTVVTCTLGEEGEIIPPALRELAADAADQLGGYRVAELRAACAALGVTDHRFLGGHGRWRDSGMVGTAANAHPRAFVAGSAQEQADELLAIINAVKPQVVVTYDGFGGYGHPDHIRAHEITTAAVAASSVVERLFHTVTSREETEAGARELAELADLPFRLPEPGELPAVDDAVITTTIDVSEHLMAKLRALRAHTTQVTVWQDGAGGASYALSNGIAQPVLPNEHYVLASGPAEGAERDLFGGLGG</sequence>